<organism>
    <name type="scientific">Arabidopsis thaliana</name>
    <name type="common">Mouse-ear cress</name>
    <dbReference type="NCBI Taxonomy" id="3702"/>
    <lineage>
        <taxon>Eukaryota</taxon>
        <taxon>Viridiplantae</taxon>
        <taxon>Streptophyta</taxon>
        <taxon>Embryophyta</taxon>
        <taxon>Tracheophyta</taxon>
        <taxon>Spermatophyta</taxon>
        <taxon>Magnoliopsida</taxon>
        <taxon>eudicotyledons</taxon>
        <taxon>Gunneridae</taxon>
        <taxon>Pentapetalae</taxon>
        <taxon>rosids</taxon>
        <taxon>malvids</taxon>
        <taxon>Brassicales</taxon>
        <taxon>Brassicaceae</taxon>
        <taxon>Camelineae</taxon>
        <taxon>Arabidopsis</taxon>
    </lineage>
</organism>
<feature type="chain" id="PRO_0000396845" description="Anaphase-promoting complex subunit 8">
    <location>
        <begin position="1"/>
        <end position="579"/>
    </location>
</feature>
<feature type="repeat" description="TPR 1">
    <location>
        <begin position="237"/>
        <end position="270"/>
    </location>
</feature>
<feature type="repeat" description="TPR 2">
    <location>
        <begin position="272"/>
        <end position="304"/>
    </location>
</feature>
<feature type="repeat" description="TPR 3">
    <location>
        <begin position="339"/>
        <end position="372"/>
    </location>
</feature>
<feature type="repeat" description="TPR 4">
    <location>
        <begin position="374"/>
        <end position="406"/>
    </location>
</feature>
<feature type="repeat" description="TPR 5">
    <location>
        <begin position="408"/>
        <end position="440"/>
    </location>
</feature>
<feature type="repeat" description="TPR 6">
    <location>
        <begin position="442"/>
        <end position="476"/>
    </location>
</feature>
<feature type="repeat" description="TPR 7">
    <location>
        <begin position="477"/>
        <end position="510"/>
    </location>
</feature>
<feature type="repeat" description="TPR 8">
    <location>
        <begin position="518"/>
        <end position="551"/>
    </location>
</feature>
<feature type="sequence conflict" description="In Ref. 3; AAL07066." evidence="3" ref="3">
    <original>E</original>
    <variation>G</variation>
    <location>
        <position position="141"/>
    </location>
</feature>
<gene>
    <name type="primary">APC8</name>
    <name type="synonym">CDC23</name>
    <name type="ordered locus">At3g48150</name>
    <name type="ORF">T24C20.30</name>
</gene>
<comment type="function">
    <text>Component of the anaphase promoting complex/cyclosome (APC/C), a cell cycle-regulated E3 ubiquitin-protein ligase complex that controls progression through mitosis and the G1 phase of the cell cycle. The APC/C complex controls several key steps in the cell cycle by mediating ubiquitination and subsequent degradation of target proteins such as cyclins. The APC/C complex is required for the female gametophyte development and is involved in several aspect of development by controlling cell division and cell elongation. Involved in the control of endoreduplication.</text>
</comment>
<comment type="pathway">
    <text>Protein modification; protein ubiquitination.</text>
</comment>
<comment type="subunit">
    <text evidence="2">The APC/C is composed of at least 10 subunits. Interacts with APC2.</text>
</comment>
<comment type="interaction">
    <interactant intactId="EBI-2130714">
        <id>Q9STS3</id>
    </interactant>
    <interactant intactId="EBI-1749410">
        <id>Q8H1U5</id>
        <label>APC2</label>
    </interactant>
    <organismsDiffer>false</organismsDiffer>
    <experiments>3</experiments>
</comment>
<comment type="interaction">
    <interactant intactId="EBI-2130714">
        <id>Q9STS3</id>
    </interactant>
    <interactant intactId="EBI-4426557">
        <id>Q84MB2</id>
        <label>TIFY8</label>
    </interactant>
    <organismsDiffer>false</organismsDiffer>
    <experiments>3</experiments>
</comment>
<comment type="interaction">
    <interactant intactId="EBI-2130714">
        <id>Q9STS3</id>
    </interactant>
    <interactant intactId="EBI-15193683">
        <id>Q5CCK4</id>
        <label>VAL2</label>
    </interactant>
    <organismsDiffer>false</organismsDiffer>
    <experiments>3</experiments>
</comment>
<comment type="subcellular location">
    <subcellularLocation>
        <location evidence="1">Nucleus</location>
    </subcellularLocation>
</comment>
<comment type="similarity">
    <text evidence="3">Belongs to the APC8/CDC23 family.</text>
</comment>
<comment type="sequence caution" evidence="3">
    <conflict type="erroneous initiation">
        <sequence resource="EMBL-CDS" id="BAD93779"/>
    </conflict>
    <text>Truncated N-terminus.</text>
</comment>
<name>CDC23_ARATH</name>
<dbReference type="EMBL" id="AL096856">
    <property type="protein sequence ID" value="CAB51062.1"/>
    <property type="molecule type" value="Genomic_DNA"/>
</dbReference>
<dbReference type="EMBL" id="CP002686">
    <property type="protein sequence ID" value="AEE78373.1"/>
    <property type="molecule type" value="Genomic_DNA"/>
</dbReference>
<dbReference type="EMBL" id="AY056217">
    <property type="protein sequence ID" value="AAL07066.1"/>
    <property type="molecule type" value="mRNA"/>
</dbReference>
<dbReference type="EMBL" id="AY057562">
    <property type="protein sequence ID" value="AAL09801.1"/>
    <property type="molecule type" value="mRNA"/>
</dbReference>
<dbReference type="EMBL" id="AY099779">
    <property type="protein sequence ID" value="AAM20630.1"/>
    <property type="molecule type" value="mRNA"/>
</dbReference>
<dbReference type="EMBL" id="BT000289">
    <property type="protein sequence ID" value="AAN15608.1"/>
    <property type="molecule type" value="mRNA"/>
</dbReference>
<dbReference type="EMBL" id="AK220695">
    <property type="protein sequence ID" value="BAD93779.1"/>
    <property type="status" value="ALT_INIT"/>
    <property type="molecule type" value="mRNA"/>
</dbReference>
<dbReference type="PIR" id="T13004">
    <property type="entry name" value="T13004"/>
</dbReference>
<dbReference type="RefSeq" id="NP_190398.1">
    <property type="nucleotide sequence ID" value="NM_114684.5"/>
</dbReference>
<dbReference type="SMR" id="Q9STS3"/>
<dbReference type="BioGRID" id="9289">
    <property type="interactions" value="87"/>
</dbReference>
<dbReference type="FunCoup" id="Q9STS3">
    <property type="interactions" value="1674"/>
</dbReference>
<dbReference type="IntAct" id="Q9STS3">
    <property type="interactions" value="88"/>
</dbReference>
<dbReference type="STRING" id="3702.Q9STS3"/>
<dbReference type="iPTMnet" id="Q9STS3"/>
<dbReference type="PaxDb" id="3702-AT3G48150.1"/>
<dbReference type="ProteomicsDB" id="220521"/>
<dbReference type="EnsemblPlants" id="AT3G48150.1">
    <property type="protein sequence ID" value="AT3G48150.1"/>
    <property type="gene ID" value="AT3G48150"/>
</dbReference>
<dbReference type="GeneID" id="823970"/>
<dbReference type="Gramene" id="AT3G48150.1">
    <property type="protein sequence ID" value="AT3G48150.1"/>
    <property type="gene ID" value="AT3G48150"/>
</dbReference>
<dbReference type="KEGG" id="ath:AT3G48150"/>
<dbReference type="Araport" id="AT3G48150"/>
<dbReference type="TAIR" id="AT3G48150">
    <property type="gene designation" value="APC8"/>
</dbReference>
<dbReference type="eggNOG" id="KOG1155">
    <property type="taxonomic scope" value="Eukaryota"/>
</dbReference>
<dbReference type="HOGENOM" id="CLU_018320_4_0_1"/>
<dbReference type="InParanoid" id="Q9STS3"/>
<dbReference type="OMA" id="ERCLYHS"/>
<dbReference type="OrthoDB" id="10262026at2759"/>
<dbReference type="PhylomeDB" id="Q9STS3"/>
<dbReference type="UniPathway" id="UPA00143"/>
<dbReference type="PRO" id="PR:Q9STS3"/>
<dbReference type="Proteomes" id="UP000006548">
    <property type="component" value="Chromosome 3"/>
</dbReference>
<dbReference type="ExpressionAtlas" id="Q9STS3">
    <property type="expression patterns" value="baseline and differential"/>
</dbReference>
<dbReference type="GO" id="GO:0005680">
    <property type="term" value="C:anaphase-promoting complex"/>
    <property type="evidence" value="ECO:0007669"/>
    <property type="project" value="InterPro"/>
</dbReference>
<dbReference type="GO" id="GO:0051301">
    <property type="term" value="P:cell division"/>
    <property type="evidence" value="ECO:0007669"/>
    <property type="project" value="UniProtKB-KW"/>
</dbReference>
<dbReference type="GO" id="GO:0016567">
    <property type="term" value="P:protein ubiquitination"/>
    <property type="evidence" value="ECO:0007669"/>
    <property type="project" value="UniProtKB-UniPathway"/>
</dbReference>
<dbReference type="GO" id="GO:0031347">
    <property type="term" value="P:regulation of defense response"/>
    <property type="evidence" value="ECO:0000315"/>
    <property type="project" value="TAIR"/>
</dbReference>
<dbReference type="FunFam" id="1.25.40.10:FF:000093">
    <property type="entry name" value="cell division cycle protein 23 homolog"/>
    <property type="match status" value="1"/>
</dbReference>
<dbReference type="Gene3D" id="1.25.40.10">
    <property type="entry name" value="Tetratricopeptide repeat domain"/>
    <property type="match status" value="2"/>
</dbReference>
<dbReference type="InterPro" id="IPR007192">
    <property type="entry name" value="APC8"/>
</dbReference>
<dbReference type="InterPro" id="IPR011990">
    <property type="entry name" value="TPR-like_helical_dom_sf"/>
</dbReference>
<dbReference type="InterPro" id="IPR019734">
    <property type="entry name" value="TPR_rpt"/>
</dbReference>
<dbReference type="PANTHER" id="PTHR12558">
    <property type="entry name" value="CELL DIVISION CYCLE 16,23,27"/>
    <property type="match status" value="1"/>
</dbReference>
<dbReference type="PANTHER" id="PTHR12558:SF10">
    <property type="entry name" value="CELL DIVISION CYCLE PROTEIN 23 HOMOLOG"/>
    <property type="match status" value="1"/>
</dbReference>
<dbReference type="Pfam" id="PF04049">
    <property type="entry name" value="ANAPC8"/>
    <property type="match status" value="1"/>
</dbReference>
<dbReference type="Pfam" id="PF13374">
    <property type="entry name" value="TPR_10"/>
    <property type="match status" value="1"/>
</dbReference>
<dbReference type="Pfam" id="PF13414">
    <property type="entry name" value="TPR_11"/>
    <property type="match status" value="1"/>
</dbReference>
<dbReference type="Pfam" id="PF13181">
    <property type="entry name" value="TPR_8"/>
    <property type="match status" value="1"/>
</dbReference>
<dbReference type="SMART" id="SM00028">
    <property type="entry name" value="TPR"/>
    <property type="match status" value="6"/>
</dbReference>
<dbReference type="SUPFAM" id="SSF48452">
    <property type="entry name" value="TPR-like"/>
    <property type="match status" value="2"/>
</dbReference>
<dbReference type="PROSITE" id="PS50005">
    <property type="entry name" value="TPR"/>
    <property type="match status" value="5"/>
</dbReference>
<dbReference type="PROSITE" id="PS50293">
    <property type="entry name" value="TPR_REGION"/>
    <property type="match status" value="1"/>
</dbReference>
<accession>Q9STS3</accession>
<accession>Q570L3</accession>
<accession>Q93ZW8</accession>
<reference key="1">
    <citation type="journal article" date="2000" name="Nature">
        <title>Sequence and analysis of chromosome 3 of the plant Arabidopsis thaliana.</title>
        <authorList>
            <person name="Salanoubat M."/>
            <person name="Lemcke K."/>
            <person name="Rieger M."/>
            <person name="Ansorge W."/>
            <person name="Unseld M."/>
            <person name="Fartmann B."/>
            <person name="Valle G."/>
            <person name="Bloecker H."/>
            <person name="Perez-Alonso M."/>
            <person name="Obermaier B."/>
            <person name="Delseny M."/>
            <person name="Boutry M."/>
            <person name="Grivell L.A."/>
            <person name="Mache R."/>
            <person name="Puigdomenech P."/>
            <person name="De Simone V."/>
            <person name="Choisne N."/>
            <person name="Artiguenave F."/>
            <person name="Robert C."/>
            <person name="Brottier P."/>
            <person name="Wincker P."/>
            <person name="Cattolico L."/>
            <person name="Weissenbach J."/>
            <person name="Saurin W."/>
            <person name="Quetier F."/>
            <person name="Schaefer M."/>
            <person name="Mueller-Auer S."/>
            <person name="Gabel C."/>
            <person name="Fuchs M."/>
            <person name="Benes V."/>
            <person name="Wurmbach E."/>
            <person name="Drzonek H."/>
            <person name="Erfle H."/>
            <person name="Jordan N."/>
            <person name="Bangert S."/>
            <person name="Wiedelmann R."/>
            <person name="Kranz H."/>
            <person name="Voss H."/>
            <person name="Holland R."/>
            <person name="Brandt P."/>
            <person name="Nyakatura G."/>
            <person name="Vezzi A."/>
            <person name="D'Angelo M."/>
            <person name="Pallavicini A."/>
            <person name="Toppo S."/>
            <person name="Simionati B."/>
            <person name="Conrad A."/>
            <person name="Hornischer K."/>
            <person name="Kauer G."/>
            <person name="Loehnert T.-H."/>
            <person name="Nordsiek G."/>
            <person name="Reichelt J."/>
            <person name="Scharfe M."/>
            <person name="Schoen O."/>
            <person name="Bargues M."/>
            <person name="Terol J."/>
            <person name="Climent J."/>
            <person name="Navarro P."/>
            <person name="Collado C."/>
            <person name="Perez-Perez A."/>
            <person name="Ottenwaelder B."/>
            <person name="Duchemin D."/>
            <person name="Cooke R."/>
            <person name="Laudie M."/>
            <person name="Berger-Llauro C."/>
            <person name="Purnelle B."/>
            <person name="Masuy D."/>
            <person name="de Haan M."/>
            <person name="Maarse A.C."/>
            <person name="Alcaraz J.-P."/>
            <person name="Cottet A."/>
            <person name="Casacuberta E."/>
            <person name="Monfort A."/>
            <person name="Argiriou A."/>
            <person name="Flores M."/>
            <person name="Liguori R."/>
            <person name="Vitale D."/>
            <person name="Mannhaupt G."/>
            <person name="Haase D."/>
            <person name="Schoof H."/>
            <person name="Rudd S."/>
            <person name="Zaccaria P."/>
            <person name="Mewes H.-W."/>
            <person name="Mayer K.F.X."/>
            <person name="Kaul S."/>
            <person name="Town C.D."/>
            <person name="Koo H.L."/>
            <person name="Tallon L.J."/>
            <person name="Jenkins J."/>
            <person name="Rooney T."/>
            <person name="Rizzo M."/>
            <person name="Walts A."/>
            <person name="Utterback T."/>
            <person name="Fujii C.Y."/>
            <person name="Shea T.P."/>
            <person name="Creasy T.H."/>
            <person name="Haas B."/>
            <person name="Maiti R."/>
            <person name="Wu D."/>
            <person name="Peterson J."/>
            <person name="Van Aken S."/>
            <person name="Pai G."/>
            <person name="Militscher J."/>
            <person name="Sellers P."/>
            <person name="Gill J.E."/>
            <person name="Feldblyum T.V."/>
            <person name="Preuss D."/>
            <person name="Lin X."/>
            <person name="Nierman W.C."/>
            <person name="Salzberg S.L."/>
            <person name="White O."/>
            <person name="Venter J.C."/>
            <person name="Fraser C.M."/>
            <person name="Kaneko T."/>
            <person name="Nakamura Y."/>
            <person name="Sato S."/>
            <person name="Kato T."/>
            <person name="Asamizu E."/>
            <person name="Sasamoto S."/>
            <person name="Kimura T."/>
            <person name="Idesawa K."/>
            <person name="Kawashima K."/>
            <person name="Kishida Y."/>
            <person name="Kiyokawa C."/>
            <person name="Kohara M."/>
            <person name="Matsumoto M."/>
            <person name="Matsuno A."/>
            <person name="Muraki A."/>
            <person name="Nakayama S."/>
            <person name="Nakazaki N."/>
            <person name="Shinpo S."/>
            <person name="Takeuchi C."/>
            <person name="Wada T."/>
            <person name="Watanabe A."/>
            <person name="Yamada M."/>
            <person name="Yasuda M."/>
            <person name="Tabata S."/>
        </authorList>
    </citation>
    <scope>NUCLEOTIDE SEQUENCE [LARGE SCALE GENOMIC DNA]</scope>
    <source>
        <strain>cv. Columbia</strain>
    </source>
</reference>
<reference key="2">
    <citation type="journal article" date="2017" name="Plant J.">
        <title>Araport11: a complete reannotation of the Arabidopsis thaliana reference genome.</title>
        <authorList>
            <person name="Cheng C.Y."/>
            <person name="Krishnakumar V."/>
            <person name="Chan A.P."/>
            <person name="Thibaud-Nissen F."/>
            <person name="Schobel S."/>
            <person name="Town C.D."/>
        </authorList>
    </citation>
    <scope>GENOME REANNOTATION</scope>
    <source>
        <strain>cv. Columbia</strain>
    </source>
</reference>
<reference key="3">
    <citation type="journal article" date="2003" name="Science">
        <title>Empirical analysis of transcriptional activity in the Arabidopsis genome.</title>
        <authorList>
            <person name="Yamada K."/>
            <person name="Lim J."/>
            <person name="Dale J.M."/>
            <person name="Chen H."/>
            <person name="Shinn P."/>
            <person name="Palm C.J."/>
            <person name="Southwick A.M."/>
            <person name="Wu H.C."/>
            <person name="Kim C.J."/>
            <person name="Nguyen M."/>
            <person name="Pham P.K."/>
            <person name="Cheuk R.F."/>
            <person name="Karlin-Newmann G."/>
            <person name="Liu S.X."/>
            <person name="Lam B."/>
            <person name="Sakano H."/>
            <person name="Wu T."/>
            <person name="Yu G."/>
            <person name="Miranda M."/>
            <person name="Quach H.L."/>
            <person name="Tripp M."/>
            <person name="Chang C.H."/>
            <person name="Lee J.M."/>
            <person name="Toriumi M.J."/>
            <person name="Chan M.M."/>
            <person name="Tang C.C."/>
            <person name="Onodera C.S."/>
            <person name="Deng J.M."/>
            <person name="Akiyama K."/>
            <person name="Ansari Y."/>
            <person name="Arakawa T."/>
            <person name="Banh J."/>
            <person name="Banno F."/>
            <person name="Bowser L."/>
            <person name="Brooks S.Y."/>
            <person name="Carninci P."/>
            <person name="Chao Q."/>
            <person name="Choy N."/>
            <person name="Enju A."/>
            <person name="Goldsmith A.D."/>
            <person name="Gurjal M."/>
            <person name="Hansen N.F."/>
            <person name="Hayashizaki Y."/>
            <person name="Johnson-Hopson C."/>
            <person name="Hsuan V.W."/>
            <person name="Iida K."/>
            <person name="Karnes M."/>
            <person name="Khan S."/>
            <person name="Koesema E."/>
            <person name="Ishida J."/>
            <person name="Jiang P.X."/>
            <person name="Jones T."/>
            <person name="Kawai J."/>
            <person name="Kamiya A."/>
            <person name="Meyers C."/>
            <person name="Nakajima M."/>
            <person name="Narusaka M."/>
            <person name="Seki M."/>
            <person name="Sakurai T."/>
            <person name="Satou M."/>
            <person name="Tamse R."/>
            <person name="Vaysberg M."/>
            <person name="Wallender E.K."/>
            <person name="Wong C."/>
            <person name="Yamamura Y."/>
            <person name="Yuan S."/>
            <person name="Shinozaki K."/>
            <person name="Davis R.W."/>
            <person name="Theologis A."/>
            <person name="Ecker J.R."/>
        </authorList>
    </citation>
    <scope>NUCLEOTIDE SEQUENCE [LARGE SCALE MRNA]</scope>
    <source>
        <strain>cv. Columbia</strain>
    </source>
</reference>
<reference key="4">
    <citation type="submission" date="2005-03" db="EMBL/GenBank/DDBJ databases">
        <title>Large-scale analysis of RIKEN Arabidopsis full-length (RAFL) cDNAs.</title>
        <authorList>
            <person name="Totoki Y."/>
            <person name="Seki M."/>
            <person name="Ishida J."/>
            <person name="Nakajima M."/>
            <person name="Enju A."/>
            <person name="Kamiya A."/>
            <person name="Narusaka M."/>
            <person name="Shin-i T."/>
            <person name="Nakagawa M."/>
            <person name="Sakamoto N."/>
            <person name="Oishi K."/>
            <person name="Kohara Y."/>
            <person name="Kobayashi M."/>
            <person name="Toyoda A."/>
            <person name="Sakaki Y."/>
            <person name="Sakurai T."/>
            <person name="Iida K."/>
            <person name="Akiyama K."/>
            <person name="Satou M."/>
            <person name="Toyoda T."/>
            <person name="Konagaya A."/>
            <person name="Carninci P."/>
            <person name="Kawai J."/>
            <person name="Hayashizaki Y."/>
            <person name="Shinozaki K."/>
        </authorList>
    </citation>
    <scope>NUCLEOTIDE SEQUENCE [LARGE SCALE MRNA] OF 405-579</scope>
    <source>
        <strain>cv. Columbia</strain>
    </source>
</reference>
<reference key="5">
    <citation type="journal article" date="2003" name="Plant Cell">
        <title>The Arabidopsis anaphase-promoting complex or cyclosome: molecular and genetic characterization of the APC2 subunit.</title>
        <authorList>
            <person name="Capron A."/>
            <person name="Serralbo O."/>
            <person name="Fulop K."/>
            <person name="Frugier F."/>
            <person name="Parmentier Y."/>
            <person name="Dong A."/>
            <person name="Lecureuil A."/>
            <person name="Guerche P."/>
            <person name="Kondorosi E."/>
            <person name="Scheres B."/>
            <person name="Genschik P."/>
        </authorList>
    </citation>
    <scope>INTERACTION WITH APC2</scope>
</reference>
<evidence type="ECO:0000250" key="1"/>
<evidence type="ECO:0000269" key="2">
    <source>
    </source>
</evidence>
<evidence type="ECO:0000305" key="3"/>
<protein>
    <recommendedName>
        <fullName>Anaphase-promoting complex subunit 8</fullName>
    </recommendedName>
    <alternativeName>
        <fullName>Cell division cycle protein 23 homolog</fullName>
        <shortName>CDC23 homolog</shortName>
    </alternativeName>
    <alternativeName>
        <fullName>Cyclosome subunit 8</fullName>
    </alternativeName>
</protein>
<sequence>MVSKECCRNEIRAAIRQLSDRCLYSAAKWAGEQLVGIEQDPSNFTPANTRFQRGSSSIRRRFSTNESISTPLPSVGFSQAATPLPEEDEAIDGDIYLLAKSYFDCREYRRASHMLRDQVSKKSLFLRYYALYLAGEKRKEEEMIELEGPLGKSDAINRELVSLERDLSALRRTGAIDSFGLYLYGVVLKEKGNESLARASLVESVNSYPWNWSAWSELQSLCTSIEILNSLNLNNHWMKEFFLGNAYQELRMHTESLAKYEYLQGIFSFSNYIQAQTAKAQYSLREFDQVEIMFEELLRNDPYRVEDMDLYSNVLYAKEACAALSYLAHKVFLTDKYRPESCCIIGNYYSLKGQHEKAVMYFRRALKLNKKYLSAWTLMGHEYVEMKNTPAAIDAYRRAVDINPTDYRAWYGLGQAYEMMGMPFYALHYFRKSIFFLPNDSRLWIAMAKCYQTEQLYMLEEAIKCYKRAVNCTDTEGIALNQLAKLHQKLGRNEEAAYYFEKDLERMDAEGLEGPNMFEALVFLATHFKNHKKFEEAEVYCTRLLDYSGPEKEKAKSLLRGIRMAQTGFPSMDLEHFPI</sequence>
<keyword id="KW-0131">Cell cycle</keyword>
<keyword id="KW-0132">Cell division</keyword>
<keyword id="KW-0498">Mitosis</keyword>
<keyword id="KW-0539">Nucleus</keyword>
<keyword id="KW-1185">Reference proteome</keyword>
<keyword id="KW-0677">Repeat</keyword>
<keyword id="KW-0802">TPR repeat</keyword>
<keyword id="KW-0833">Ubl conjugation pathway</keyword>
<proteinExistence type="evidence at protein level"/>